<proteinExistence type="evidence at protein level"/>
<evidence type="ECO:0000250" key="1">
    <source>
        <dbReference type="UniProtKB" id="Q15020"/>
    </source>
</evidence>
<evidence type="ECO:0000255" key="2"/>
<evidence type="ECO:0000255" key="3">
    <source>
        <dbReference type="PROSITE-ProRule" id="PRU00176"/>
    </source>
</evidence>
<evidence type="ECO:0000255" key="4">
    <source>
        <dbReference type="PROSITE-ProRule" id="PRU00768"/>
    </source>
</evidence>
<evidence type="ECO:0000256" key="5">
    <source>
        <dbReference type="SAM" id="MobiDB-lite"/>
    </source>
</evidence>
<evidence type="ECO:0000269" key="6">
    <source>
    </source>
</evidence>
<evidence type="ECO:0000269" key="7">
    <source>
    </source>
</evidence>
<evidence type="ECO:0000269" key="8">
    <source>
    </source>
</evidence>
<evidence type="ECO:0000303" key="9">
    <source>
    </source>
</evidence>
<evidence type="ECO:0000303" key="10">
    <source>
    </source>
</evidence>
<evidence type="ECO:0000303" key="11">
    <source>
    </source>
</evidence>
<evidence type="ECO:0000305" key="12"/>
<evidence type="ECO:0000312" key="13">
    <source>
        <dbReference type="EMBL" id="BAC97877.2"/>
    </source>
</evidence>
<evidence type="ECO:0000312" key="14">
    <source>
        <dbReference type="MGI" id="MGI:1858230"/>
    </source>
</evidence>
<gene>
    <name evidence="14" type="primary">Sart3</name>
    <name evidence="13" type="synonym">Kiaa0156</name>
</gene>
<protein>
    <recommendedName>
        <fullName evidence="1">Spliceosome associated factor 3, U4/U6 recycling protein</fullName>
    </recommendedName>
    <alternativeName>
        <fullName evidence="12">Squamous cell carcinoma antigen recognized by T-cells 3</fullName>
        <shortName evidence="9">SART-3</shortName>
        <shortName evidence="9">mSART-3</shortName>
    </alternativeName>
    <alternativeName>
        <fullName evidence="9">Tumor-rejection antigen SART3</fullName>
    </alternativeName>
</protein>
<name>SART3_MOUSE</name>
<reference key="1">
    <citation type="journal article" date="2000" name="Jpn. J. Cancer Res.">
        <title>Mouse homologue of the human SART3 gene encoding tumor-rejection antigen.</title>
        <authorList>
            <person name="Harada K."/>
            <person name="Yamada A."/>
            <person name="Mine T."/>
            <person name="Kawagoe N."/>
            <person name="Takasu H."/>
            <person name="Itoh K."/>
        </authorList>
    </citation>
    <scope>NUCLEOTIDE SEQUENCE [MRNA] (ISOFORM 1)</scope>
    <scope>TISSUE SPECIFICITY</scope>
    <scope>DEVELOPMENTAL STAGE</scope>
    <source>
        <strain>BALB/cJ</strain>
        <tissue>Squamous cell carcinoma</tissue>
    </source>
</reference>
<reference key="2">
    <citation type="journal article" date="2003" name="DNA Res.">
        <title>Prediction of the coding sequences of mouse homologues of KIAA gene: III. The complete nucleotide sequences of 500 mouse KIAA-homologous cDNAs identified by screening of terminal sequences of cDNA clones randomly sampled from size-fractionated libraries.</title>
        <authorList>
            <person name="Okazaki N."/>
            <person name="Kikuno R."/>
            <person name="Ohara R."/>
            <person name="Inamoto S."/>
            <person name="Koseki H."/>
            <person name="Hiraoka S."/>
            <person name="Saga Y."/>
            <person name="Nagase T."/>
            <person name="Ohara O."/>
            <person name="Koga H."/>
        </authorList>
    </citation>
    <scope>NUCLEOTIDE SEQUENCE [LARGE SCALE MRNA] (ISOFORM 1)</scope>
    <source>
        <tissue>Embryonic tail</tissue>
    </source>
</reference>
<reference key="3">
    <citation type="submission" date="2003-12" db="EMBL/GenBank/DDBJ databases">
        <authorList>
            <person name="Okazaki N."/>
            <person name="Kikuno R."/>
            <person name="Nagase T."/>
            <person name="Ohara O."/>
            <person name="Koga H."/>
        </authorList>
    </citation>
    <scope>SEQUENCE REVISION</scope>
</reference>
<reference key="4">
    <citation type="journal article" date="2005" name="Science">
        <title>The transcriptional landscape of the mammalian genome.</title>
        <authorList>
            <person name="Carninci P."/>
            <person name="Kasukawa T."/>
            <person name="Katayama S."/>
            <person name="Gough J."/>
            <person name="Frith M.C."/>
            <person name="Maeda N."/>
            <person name="Oyama R."/>
            <person name="Ravasi T."/>
            <person name="Lenhard B."/>
            <person name="Wells C."/>
            <person name="Kodzius R."/>
            <person name="Shimokawa K."/>
            <person name="Bajic V.B."/>
            <person name="Brenner S.E."/>
            <person name="Batalov S."/>
            <person name="Forrest A.R."/>
            <person name="Zavolan M."/>
            <person name="Davis M.J."/>
            <person name="Wilming L.G."/>
            <person name="Aidinis V."/>
            <person name="Allen J.E."/>
            <person name="Ambesi-Impiombato A."/>
            <person name="Apweiler R."/>
            <person name="Aturaliya R.N."/>
            <person name="Bailey T.L."/>
            <person name="Bansal M."/>
            <person name="Baxter L."/>
            <person name="Beisel K.W."/>
            <person name="Bersano T."/>
            <person name="Bono H."/>
            <person name="Chalk A.M."/>
            <person name="Chiu K.P."/>
            <person name="Choudhary V."/>
            <person name="Christoffels A."/>
            <person name="Clutterbuck D.R."/>
            <person name="Crowe M.L."/>
            <person name="Dalla E."/>
            <person name="Dalrymple B.P."/>
            <person name="de Bono B."/>
            <person name="Della Gatta G."/>
            <person name="di Bernardo D."/>
            <person name="Down T."/>
            <person name="Engstrom P."/>
            <person name="Fagiolini M."/>
            <person name="Faulkner G."/>
            <person name="Fletcher C.F."/>
            <person name="Fukushima T."/>
            <person name="Furuno M."/>
            <person name="Futaki S."/>
            <person name="Gariboldi M."/>
            <person name="Georgii-Hemming P."/>
            <person name="Gingeras T.R."/>
            <person name="Gojobori T."/>
            <person name="Green R.E."/>
            <person name="Gustincich S."/>
            <person name="Harbers M."/>
            <person name="Hayashi Y."/>
            <person name="Hensch T.K."/>
            <person name="Hirokawa N."/>
            <person name="Hill D."/>
            <person name="Huminiecki L."/>
            <person name="Iacono M."/>
            <person name="Ikeo K."/>
            <person name="Iwama A."/>
            <person name="Ishikawa T."/>
            <person name="Jakt M."/>
            <person name="Kanapin A."/>
            <person name="Katoh M."/>
            <person name="Kawasawa Y."/>
            <person name="Kelso J."/>
            <person name="Kitamura H."/>
            <person name="Kitano H."/>
            <person name="Kollias G."/>
            <person name="Krishnan S.P."/>
            <person name="Kruger A."/>
            <person name="Kummerfeld S.K."/>
            <person name="Kurochkin I.V."/>
            <person name="Lareau L.F."/>
            <person name="Lazarevic D."/>
            <person name="Lipovich L."/>
            <person name="Liu J."/>
            <person name="Liuni S."/>
            <person name="McWilliam S."/>
            <person name="Madan Babu M."/>
            <person name="Madera M."/>
            <person name="Marchionni L."/>
            <person name="Matsuda H."/>
            <person name="Matsuzawa S."/>
            <person name="Miki H."/>
            <person name="Mignone F."/>
            <person name="Miyake S."/>
            <person name="Morris K."/>
            <person name="Mottagui-Tabar S."/>
            <person name="Mulder N."/>
            <person name="Nakano N."/>
            <person name="Nakauchi H."/>
            <person name="Ng P."/>
            <person name="Nilsson R."/>
            <person name="Nishiguchi S."/>
            <person name="Nishikawa S."/>
            <person name="Nori F."/>
            <person name="Ohara O."/>
            <person name="Okazaki Y."/>
            <person name="Orlando V."/>
            <person name="Pang K.C."/>
            <person name="Pavan W.J."/>
            <person name="Pavesi G."/>
            <person name="Pesole G."/>
            <person name="Petrovsky N."/>
            <person name="Piazza S."/>
            <person name="Reed J."/>
            <person name="Reid J.F."/>
            <person name="Ring B.Z."/>
            <person name="Ringwald M."/>
            <person name="Rost B."/>
            <person name="Ruan Y."/>
            <person name="Salzberg S.L."/>
            <person name="Sandelin A."/>
            <person name="Schneider C."/>
            <person name="Schoenbach C."/>
            <person name="Sekiguchi K."/>
            <person name="Semple C.A."/>
            <person name="Seno S."/>
            <person name="Sessa L."/>
            <person name="Sheng Y."/>
            <person name="Shibata Y."/>
            <person name="Shimada H."/>
            <person name="Shimada K."/>
            <person name="Silva D."/>
            <person name="Sinclair B."/>
            <person name="Sperling S."/>
            <person name="Stupka E."/>
            <person name="Sugiura K."/>
            <person name="Sultana R."/>
            <person name="Takenaka Y."/>
            <person name="Taki K."/>
            <person name="Tammoja K."/>
            <person name="Tan S.L."/>
            <person name="Tang S."/>
            <person name="Taylor M.S."/>
            <person name="Tegner J."/>
            <person name="Teichmann S.A."/>
            <person name="Ueda H.R."/>
            <person name="van Nimwegen E."/>
            <person name="Verardo R."/>
            <person name="Wei C.L."/>
            <person name="Yagi K."/>
            <person name="Yamanishi H."/>
            <person name="Zabarovsky E."/>
            <person name="Zhu S."/>
            <person name="Zimmer A."/>
            <person name="Hide W."/>
            <person name="Bult C."/>
            <person name="Grimmond S.M."/>
            <person name="Teasdale R.D."/>
            <person name="Liu E.T."/>
            <person name="Brusic V."/>
            <person name="Quackenbush J."/>
            <person name="Wahlestedt C."/>
            <person name="Mattick J.S."/>
            <person name="Hume D.A."/>
            <person name="Kai C."/>
            <person name="Sasaki D."/>
            <person name="Tomaru Y."/>
            <person name="Fukuda S."/>
            <person name="Kanamori-Katayama M."/>
            <person name="Suzuki M."/>
            <person name="Aoki J."/>
            <person name="Arakawa T."/>
            <person name="Iida J."/>
            <person name="Imamura K."/>
            <person name="Itoh M."/>
            <person name="Kato T."/>
            <person name="Kawaji H."/>
            <person name="Kawagashira N."/>
            <person name="Kawashima T."/>
            <person name="Kojima M."/>
            <person name="Kondo S."/>
            <person name="Konno H."/>
            <person name="Nakano K."/>
            <person name="Ninomiya N."/>
            <person name="Nishio T."/>
            <person name="Okada M."/>
            <person name="Plessy C."/>
            <person name="Shibata K."/>
            <person name="Shiraki T."/>
            <person name="Suzuki S."/>
            <person name="Tagami M."/>
            <person name="Waki K."/>
            <person name="Watahiki A."/>
            <person name="Okamura-Oho Y."/>
            <person name="Suzuki H."/>
            <person name="Kawai J."/>
            <person name="Hayashizaki Y."/>
        </authorList>
    </citation>
    <scope>NUCLEOTIDE SEQUENCE [LARGE SCALE MRNA] (ISOFORM 1)</scope>
    <source>
        <strain>C57BL/6J</strain>
        <tissue>Eye</tissue>
        <tissue>Head</tissue>
    </source>
</reference>
<reference key="5">
    <citation type="journal article" date="2004" name="Genome Res.">
        <title>The status, quality, and expansion of the NIH full-length cDNA project: the Mammalian Gene Collection (MGC).</title>
        <authorList>
            <consortium name="The MGC Project Team"/>
        </authorList>
    </citation>
    <scope>NUCLEOTIDE SEQUENCE [LARGE SCALE MRNA] (ISOFORMS 1 AND 2)</scope>
    <source>
        <strain>NMRI</strain>
        <tissue>Mammary gland</tissue>
        <tissue>Mammary tumor</tissue>
    </source>
</reference>
<reference key="6">
    <citation type="journal article" date="1999" name="Cancer Res.">
        <title>Identification of a gene coding for a protein possessing shared tumor epitopes capable of inducing HLA-A24-restricted cytotoxic T lymphocytes in cancer patients.</title>
        <authorList>
            <person name="Yang D."/>
            <person name="Nakao M."/>
            <person name="Shichijo S."/>
            <person name="Sasatomi T."/>
            <person name="Takasu H."/>
            <person name="Matsumoto H."/>
            <person name="Mori K."/>
            <person name="Hayashi A."/>
            <person name="Yamana H."/>
            <person name="Shirouzu K."/>
            <person name="Itoh K."/>
        </authorList>
    </citation>
    <scope>REGION</scope>
</reference>
<reference key="7">
    <citation type="journal article" date="2003" name="J. Cell Biol.">
        <title>Targeting of U4/U6 small nuclear RNP assembly factor SART3/p110 to Cajal bodies.</title>
        <authorList>
            <person name="Stanek D."/>
            <person name="Rader S.D."/>
            <person name="Klingauf M."/>
            <person name="Neugebauer K.M."/>
        </authorList>
    </citation>
    <scope>SUBCELLULAR LOCATION</scope>
</reference>
<reference key="8">
    <citation type="journal article" date="2010" name="Cell">
        <title>A tissue-specific atlas of mouse protein phosphorylation and expression.</title>
        <authorList>
            <person name="Huttlin E.L."/>
            <person name="Jedrychowski M.P."/>
            <person name="Elias J.E."/>
            <person name="Goswami T."/>
            <person name="Rad R."/>
            <person name="Beausoleil S.A."/>
            <person name="Villen J."/>
            <person name="Haas W."/>
            <person name="Sowa M.E."/>
            <person name="Gygi S.P."/>
        </authorList>
    </citation>
    <scope>IDENTIFICATION BY MASS SPECTROMETRY [LARGE SCALE ANALYSIS]</scope>
    <source>
        <tissue>Brain</tissue>
        <tissue>Brown adipose tissue</tissue>
        <tissue>Heart</tissue>
        <tissue>Kidney</tissue>
        <tissue>Liver</tissue>
        <tissue>Lung</tissue>
        <tissue>Pancreas</tissue>
        <tissue>Spleen</tissue>
        <tissue>Testis</tissue>
    </source>
</reference>
<reference key="9">
    <citation type="journal article" date="2011" name="Blood">
        <title>TIP110/p110nrb/SART3/p110 regulation of hematopoiesis through CMYC.</title>
        <authorList>
            <person name="Liu Y."/>
            <person name="Timani K."/>
            <person name="Mantel C."/>
            <person name="Fan Y."/>
            <person name="Hangoc G."/>
            <person name="Cooper S."/>
            <person name="He J.J."/>
            <person name="Broxmeyer H.E."/>
        </authorList>
    </citation>
    <scope>FUNCTION</scope>
    <scope>DISRUPTION PHENOTYPE</scope>
    <scope>TISSUE SPECIFICITY</scope>
    <scope>INDUCTION</scope>
</reference>
<keyword id="KW-0007">Acetylation</keyword>
<keyword id="KW-0025">Alternative splicing</keyword>
<keyword id="KW-0175">Coiled coil</keyword>
<keyword id="KW-0963">Cytoplasm</keyword>
<keyword id="KW-0488">Methylation</keyword>
<keyword id="KW-0507">mRNA processing</keyword>
<keyword id="KW-0508">mRNA splicing</keyword>
<keyword id="KW-0539">Nucleus</keyword>
<keyword id="KW-0597">Phosphoprotein</keyword>
<keyword id="KW-1185">Reference proteome</keyword>
<keyword id="KW-0677">Repeat</keyword>
<keyword id="KW-0694">RNA-binding</keyword>
<dbReference type="EMBL" id="AF172722">
    <property type="protein sequence ID" value="AAF65228.1"/>
    <property type="molecule type" value="mRNA"/>
</dbReference>
<dbReference type="EMBL" id="AK053828">
    <property type="protein sequence ID" value="BAC35544.1"/>
    <property type="molecule type" value="mRNA"/>
</dbReference>
<dbReference type="EMBL" id="AK129067">
    <property type="protein sequence ID" value="BAC97877.2"/>
    <property type="molecule type" value="Transcribed_RNA"/>
</dbReference>
<dbReference type="EMBL" id="AK086398">
    <property type="protein sequence ID" value="BAC39661.1"/>
    <property type="molecule type" value="mRNA"/>
</dbReference>
<dbReference type="EMBL" id="BC036350">
    <property type="protein sequence ID" value="AAH36350.1"/>
    <property type="status" value="ALT_INIT"/>
    <property type="molecule type" value="mRNA"/>
</dbReference>
<dbReference type="EMBL" id="BC057156">
    <property type="protein sequence ID" value="AAH57156.1"/>
    <property type="molecule type" value="mRNA"/>
</dbReference>
<dbReference type="CCDS" id="CCDS19552.1">
    <molecule id="Q9JLI8-1"/>
</dbReference>
<dbReference type="RefSeq" id="NP_058622.1">
    <molecule id="Q9JLI8-1"/>
    <property type="nucleotide sequence ID" value="NM_016926.2"/>
</dbReference>
<dbReference type="SMR" id="Q9JLI8"/>
<dbReference type="BioGRID" id="207514">
    <property type="interactions" value="30"/>
</dbReference>
<dbReference type="FunCoup" id="Q9JLI8">
    <property type="interactions" value="4520"/>
</dbReference>
<dbReference type="IntAct" id="Q9JLI8">
    <property type="interactions" value="21"/>
</dbReference>
<dbReference type="STRING" id="10090.ENSMUSP00000019118"/>
<dbReference type="iPTMnet" id="Q9JLI8"/>
<dbReference type="PhosphoSitePlus" id="Q9JLI8"/>
<dbReference type="SwissPalm" id="Q9JLI8"/>
<dbReference type="jPOST" id="Q9JLI8"/>
<dbReference type="PaxDb" id="10090-ENSMUSP00000019118"/>
<dbReference type="PeptideAtlas" id="Q9JLI8"/>
<dbReference type="ProteomicsDB" id="256837">
    <molecule id="Q9JLI8-1"/>
</dbReference>
<dbReference type="ProteomicsDB" id="256838">
    <molecule id="Q9JLI8-2"/>
</dbReference>
<dbReference type="Pumba" id="Q9JLI8"/>
<dbReference type="Antibodypedia" id="18276">
    <property type="antibodies" value="248 antibodies from 35 providers"/>
</dbReference>
<dbReference type="DNASU" id="53890"/>
<dbReference type="Ensembl" id="ENSMUST00000019118.8">
    <molecule id="Q9JLI8-1"/>
    <property type="protein sequence ID" value="ENSMUSP00000019118.4"/>
    <property type="gene ID" value="ENSMUSG00000018974.8"/>
</dbReference>
<dbReference type="Ensembl" id="ENSMUST00000197041.2">
    <molecule id="Q9JLI8-2"/>
    <property type="protein sequence ID" value="ENSMUSP00000143778.2"/>
    <property type="gene ID" value="ENSMUSG00000018974.8"/>
</dbReference>
<dbReference type="GeneID" id="53890"/>
<dbReference type="KEGG" id="mmu:53890"/>
<dbReference type="UCSC" id="uc008yym.1">
    <molecule id="Q9JLI8-1"/>
    <property type="organism name" value="mouse"/>
</dbReference>
<dbReference type="AGR" id="MGI:1858230"/>
<dbReference type="CTD" id="9733"/>
<dbReference type="MGI" id="MGI:1858230">
    <property type="gene designation" value="Sart3"/>
</dbReference>
<dbReference type="VEuPathDB" id="HostDB:ENSMUSG00000018974"/>
<dbReference type="eggNOG" id="KOG0128">
    <property type="taxonomic scope" value="Eukaryota"/>
</dbReference>
<dbReference type="GeneTree" id="ENSGT00900000141107"/>
<dbReference type="HOGENOM" id="CLU_007172_0_0_1"/>
<dbReference type="InParanoid" id="Q9JLI8"/>
<dbReference type="OMA" id="LWARYIL"/>
<dbReference type="OrthoDB" id="360390at2759"/>
<dbReference type="PhylomeDB" id="Q9JLI8"/>
<dbReference type="TreeFam" id="TF317554"/>
<dbReference type="BioGRID-ORCS" id="53890">
    <property type="hits" value="23 hits in 79 CRISPR screens"/>
</dbReference>
<dbReference type="ChiTaRS" id="Sart3">
    <property type="organism name" value="mouse"/>
</dbReference>
<dbReference type="PRO" id="PR:Q9JLI8"/>
<dbReference type="Proteomes" id="UP000000589">
    <property type="component" value="Chromosome 5"/>
</dbReference>
<dbReference type="RNAct" id="Q9JLI8">
    <property type="molecule type" value="protein"/>
</dbReference>
<dbReference type="Bgee" id="ENSMUSG00000018974">
    <property type="expression patterns" value="Expressed in embryonic post-anal tail and 254 other cell types or tissues"/>
</dbReference>
<dbReference type="GO" id="GO:0015030">
    <property type="term" value="C:Cajal body"/>
    <property type="evidence" value="ECO:0000314"/>
    <property type="project" value="UniProtKB"/>
</dbReference>
<dbReference type="GO" id="GO:0005737">
    <property type="term" value="C:cytoplasm"/>
    <property type="evidence" value="ECO:0007669"/>
    <property type="project" value="UniProtKB-SubCell"/>
</dbReference>
<dbReference type="GO" id="GO:0016607">
    <property type="term" value="C:nuclear speck"/>
    <property type="evidence" value="ECO:0007669"/>
    <property type="project" value="UniProtKB-SubCell"/>
</dbReference>
<dbReference type="GO" id="GO:0005654">
    <property type="term" value="C:nucleoplasm"/>
    <property type="evidence" value="ECO:0000314"/>
    <property type="project" value="UniProtKB"/>
</dbReference>
<dbReference type="GO" id="GO:0005634">
    <property type="term" value="C:nucleus"/>
    <property type="evidence" value="ECO:0000266"/>
    <property type="project" value="MGI"/>
</dbReference>
<dbReference type="GO" id="GO:0071001">
    <property type="term" value="C:U4/U6 snRNP"/>
    <property type="evidence" value="ECO:0007669"/>
    <property type="project" value="Ensembl"/>
</dbReference>
<dbReference type="GO" id="GO:0005691">
    <property type="term" value="C:U6atac snRNP"/>
    <property type="evidence" value="ECO:0007669"/>
    <property type="project" value="Ensembl"/>
</dbReference>
<dbReference type="GO" id="GO:0042393">
    <property type="term" value="F:histone binding"/>
    <property type="evidence" value="ECO:0000250"/>
    <property type="project" value="UniProtKB"/>
</dbReference>
<dbReference type="GO" id="GO:0030674">
    <property type="term" value="F:protein-macromolecule adaptor activity"/>
    <property type="evidence" value="ECO:0007669"/>
    <property type="project" value="Ensembl"/>
</dbReference>
<dbReference type="GO" id="GO:0003723">
    <property type="term" value="F:RNA binding"/>
    <property type="evidence" value="ECO:0000266"/>
    <property type="project" value="MGI"/>
</dbReference>
<dbReference type="GO" id="GO:0030621">
    <property type="term" value="F:U4 snRNA binding"/>
    <property type="evidence" value="ECO:0007669"/>
    <property type="project" value="Ensembl"/>
</dbReference>
<dbReference type="GO" id="GO:0017070">
    <property type="term" value="F:U6 snRNA binding"/>
    <property type="evidence" value="ECO:0000250"/>
    <property type="project" value="UniProtKB"/>
</dbReference>
<dbReference type="GO" id="GO:0030624">
    <property type="term" value="F:U6atac snRNA binding"/>
    <property type="evidence" value="ECO:0000250"/>
    <property type="project" value="UniProtKB"/>
</dbReference>
<dbReference type="GO" id="GO:1990381">
    <property type="term" value="F:ubiquitin-specific protease binding"/>
    <property type="evidence" value="ECO:0007669"/>
    <property type="project" value="Ensembl"/>
</dbReference>
<dbReference type="GO" id="GO:0000902">
    <property type="term" value="P:cell morphogenesis"/>
    <property type="evidence" value="ECO:0000315"/>
    <property type="project" value="MGI"/>
</dbReference>
<dbReference type="GO" id="GO:0071425">
    <property type="term" value="P:hematopoietic stem cell proliferation"/>
    <property type="evidence" value="ECO:0000315"/>
    <property type="project" value="MGI"/>
</dbReference>
<dbReference type="GO" id="GO:0048872">
    <property type="term" value="P:homeostasis of number of cells"/>
    <property type="evidence" value="ECO:0000315"/>
    <property type="project" value="MGI"/>
</dbReference>
<dbReference type="GO" id="GO:0000398">
    <property type="term" value="P:mRNA splicing, via spliceosome"/>
    <property type="evidence" value="ECO:0000250"/>
    <property type="project" value="UniProtKB"/>
</dbReference>
<dbReference type="GO" id="GO:0006334">
    <property type="term" value="P:nucleosome assembly"/>
    <property type="evidence" value="ECO:0000250"/>
    <property type="project" value="UniProtKB"/>
</dbReference>
<dbReference type="GO" id="GO:0010468">
    <property type="term" value="P:regulation of gene expression"/>
    <property type="evidence" value="ECO:0000266"/>
    <property type="project" value="MGI"/>
</dbReference>
<dbReference type="GO" id="GO:0051252">
    <property type="term" value="P:regulation of RNA metabolic process"/>
    <property type="evidence" value="ECO:0007669"/>
    <property type="project" value="Ensembl"/>
</dbReference>
<dbReference type="GO" id="GO:0000387">
    <property type="term" value="P:spliceosomal snRNP assembly"/>
    <property type="evidence" value="ECO:0000250"/>
    <property type="project" value="UniProtKB"/>
</dbReference>
<dbReference type="GO" id="GO:0000244">
    <property type="term" value="P:spliceosomal tri-snRNP complex assembly"/>
    <property type="evidence" value="ECO:0000250"/>
    <property type="project" value="UniProtKB"/>
</dbReference>
<dbReference type="GO" id="GO:0140673">
    <property type="term" value="P:transcription elongation-coupled chromatin remodeling"/>
    <property type="evidence" value="ECO:0000250"/>
    <property type="project" value="UniProtKB"/>
</dbReference>
<dbReference type="CDD" id="cd12391">
    <property type="entry name" value="RRM1_SART3"/>
    <property type="match status" value="1"/>
</dbReference>
<dbReference type="CDD" id="cd12392">
    <property type="entry name" value="RRM2_SART3"/>
    <property type="match status" value="1"/>
</dbReference>
<dbReference type="FunFam" id="1.25.40.10:FF:000098">
    <property type="entry name" value="Squamous cell carcinoma antigen recognized by T-cells 3"/>
    <property type="match status" value="1"/>
</dbReference>
<dbReference type="FunFam" id="3.30.70.330:FF:000229">
    <property type="entry name" value="Squamous cell carcinoma antigen recognized by T-cells 3"/>
    <property type="match status" value="1"/>
</dbReference>
<dbReference type="FunFam" id="1.25.40.10:FF:000081">
    <property type="entry name" value="squamous cell carcinoma antigen recognized by T-cells 3"/>
    <property type="match status" value="1"/>
</dbReference>
<dbReference type="FunFam" id="3.30.70.330:FF:000271">
    <property type="entry name" value="squamous cell carcinoma antigen recognized by T-cells 3"/>
    <property type="match status" value="1"/>
</dbReference>
<dbReference type="Gene3D" id="3.30.70.330">
    <property type="match status" value="2"/>
</dbReference>
<dbReference type="Gene3D" id="1.25.40.10">
    <property type="entry name" value="Tetratricopeptide repeat domain"/>
    <property type="match status" value="2"/>
</dbReference>
<dbReference type="InterPro" id="IPR003107">
    <property type="entry name" value="HAT"/>
</dbReference>
<dbReference type="InterPro" id="IPR008669">
    <property type="entry name" value="LSM_interact"/>
</dbReference>
<dbReference type="InterPro" id="IPR012677">
    <property type="entry name" value="Nucleotide-bd_a/b_plait_sf"/>
</dbReference>
<dbReference type="InterPro" id="IPR035979">
    <property type="entry name" value="RBD_domain_sf"/>
</dbReference>
<dbReference type="InterPro" id="IPR000504">
    <property type="entry name" value="RRM_dom"/>
</dbReference>
<dbReference type="InterPro" id="IPR034217">
    <property type="entry name" value="SART3_RRM1"/>
</dbReference>
<dbReference type="InterPro" id="IPR034218">
    <property type="entry name" value="SART3_RRM2"/>
</dbReference>
<dbReference type="InterPro" id="IPR011990">
    <property type="entry name" value="TPR-like_helical_dom_sf"/>
</dbReference>
<dbReference type="PANTHER" id="PTHR17204">
    <property type="entry name" value="PRE-MRNA PROCESSING PROTEIN PRP39-RELATED"/>
    <property type="match status" value="1"/>
</dbReference>
<dbReference type="PANTHER" id="PTHR17204:SF25">
    <property type="entry name" value="RRM DOMAIN-CONTAINING PROTEIN"/>
    <property type="match status" value="1"/>
</dbReference>
<dbReference type="Pfam" id="PF23241">
    <property type="entry name" value="HAT_PRP39_C"/>
    <property type="match status" value="1"/>
</dbReference>
<dbReference type="Pfam" id="PF23240">
    <property type="entry name" value="HAT_PRP39_N"/>
    <property type="match status" value="1"/>
</dbReference>
<dbReference type="Pfam" id="PF16605">
    <property type="entry name" value="LSM_int_assoc"/>
    <property type="match status" value="1"/>
</dbReference>
<dbReference type="Pfam" id="PF05391">
    <property type="entry name" value="Lsm_interact"/>
    <property type="match status" value="1"/>
</dbReference>
<dbReference type="Pfam" id="PF00076">
    <property type="entry name" value="RRM_1"/>
    <property type="match status" value="2"/>
</dbReference>
<dbReference type="SMART" id="SM00386">
    <property type="entry name" value="HAT"/>
    <property type="match status" value="7"/>
</dbReference>
<dbReference type="SMART" id="SM00360">
    <property type="entry name" value="RRM"/>
    <property type="match status" value="2"/>
</dbReference>
<dbReference type="SUPFAM" id="SSF54928">
    <property type="entry name" value="RNA-binding domain, RBD"/>
    <property type="match status" value="2"/>
</dbReference>
<dbReference type="SUPFAM" id="SSF48452">
    <property type="entry name" value="TPR-like"/>
    <property type="match status" value="1"/>
</dbReference>
<dbReference type="PROSITE" id="PS50102">
    <property type="entry name" value="RRM"/>
    <property type="match status" value="2"/>
</dbReference>
<organism>
    <name type="scientific">Mus musculus</name>
    <name type="common">Mouse</name>
    <dbReference type="NCBI Taxonomy" id="10090"/>
    <lineage>
        <taxon>Eukaryota</taxon>
        <taxon>Metazoa</taxon>
        <taxon>Chordata</taxon>
        <taxon>Craniata</taxon>
        <taxon>Vertebrata</taxon>
        <taxon>Euteleostomi</taxon>
        <taxon>Mammalia</taxon>
        <taxon>Eutheria</taxon>
        <taxon>Euarchontoglires</taxon>
        <taxon>Glires</taxon>
        <taxon>Rodentia</taxon>
        <taxon>Myomorpha</taxon>
        <taxon>Muroidea</taxon>
        <taxon>Muridae</taxon>
        <taxon>Murinae</taxon>
        <taxon>Mus</taxon>
        <taxon>Mus</taxon>
    </lineage>
</organism>
<sequence>MATTAASSASEPEVEPQAGPEAEGEEDEAKPAGVQRKVLSGAVAAEAAEAKGPGWDLQREGASGSDGDEEDAMASSAESSAGEDEWEYDEEEEKNQLEIERLEEQLSINGYDYNCHVELIRLLRLEGELSRVRAARQKMSELFPLTEELWLEWLHDEISMAMDGLDREHVYELFERAVKDYICPNIWLEYGQYSVGGIGQKGGLEKVRSVFERALSSVGLHMTKGLAIWEAYREFESAIVEAARLEKVHSLFRRQLAIPLYEMEATFAEYEEWSEEPMPESVLQSYQKALGQLEKYKPYEEALLQAEAPRLAEYQAYIDFEMKIGDPARIQLIFERALVENCLVPDLWIRYSQYLDRQLKVKDLVLSVHSRAVRNCPWTVALWSRYLLAMERHGLDHQTISATFENALSAGFIQATDYVEIWQVYLDYLRRRVDFRQDSSKELEELRSMFTRALEYLQQEVEERFSESGDPSCLIMQSWARVEARLCNNMQKARELWDSIMTRGNAKYANMWLEYYNLERAHGDTQHCRKALHRAVQCTSDYPEHVCEVLLTMERTEGTLEDWDLAIQKTETRLARVNEQRMKAAEKEAALVQQEEEKAEQRKKVRAEKKALKKKKKTRGADKRREDEDEENEWGEEEEEQPSKRRRTENSLASGEASAMKEETELSGKCLTIDVGPPSKQKEKAASLKRDMPKVAHDSSKDSVTVFVSNLPYSIEEPEVKLRPLFEVCGEVVQIRPIFSNRGDFRGYCYVEFGEEKSAQQALELDRKIVEGRPMFVSPCVDKSKNPDFKVFRYSTTLEKHKLFISGLPFSCTKEELEDICKAHGTVKDLRLVTNRAGKPKGLAYVEYENESQASQAVMKMDGMTIRENVIKVAISNPPQRKVPEKPEVRTAPGAPMLPRQMYGARGKGRTQLSLLPRALQRQGAAPQAENGPAPGPAVAPSVATEAPKMSNADFAKLLLRK</sequence>
<comment type="function">
    <text evidence="1 8">U6 snRNP-binding protein that functions as a recycling factor of the splicing machinery. Promotes the initial reassembly of U4 and U6 snRNPs following their ejection from the spliceosome during its maturation. Also binds U6atac snRNPs and may function as a recycling factor for U4atac/U6atac spliceosomal snRNP, an initial step in the assembly of U12-type spliceosomal complex. The U12-type spliceosomal complex plays a role in the splicing of introns with non-canonical splice sites. May also function as a substrate-targeting factor for deubiquitinases like USP4 and USP15. Recruits USP4 to ubiquitinated PRPF3 within the U4/U5/U6 tri-snRNP complex, promoting PRPF3 deubiquitination and thereby regulating the spliceosome U4/U5/U6 tri-snRNP spliceosomal complex disassembly. May also recruit the deubiquitinase USP15 to histone H2B and mediate histone deubiquitination, thereby regulating gene expression and/or DNA repair (By similarity). May play a role in hematopoiesis probably through transcription regulation of specific genes including MYC (PubMed:21447833).</text>
</comment>
<comment type="subunit">
    <text evidence="1">Component of the 7SK snRNP complex at least composed of P-TEFb (composed of CDK9 and CCNT1/cyclin-T1), HEXIM1, HEXIM2, BCDIN3, SART3 proteins and 7SK and U6 snRNAs. Interacts with AGO1 and AGO2. Interacts with PRPF3 and USP4; the interaction with PRPF3 is direct and recruits USP4 to its substrate PRPF3. Interacts with USP15; the interaction is direct.</text>
</comment>
<comment type="subcellular location">
    <subcellularLocation>
        <location evidence="7">Nucleus</location>
        <location evidence="7">Nucleoplasm</location>
    </subcellularLocation>
    <subcellularLocation>
        <location evidence="7">Nucleus</location>
        <location evidence="7">Cajal body</location>
    </subcellularLocation>
    <subcellularLocation>
        <location evidence="1">Nucleus speckle</location>
    </subcellularLocation>
    <subcellularLocation>
        <location evidence="1">Cytoplasm</location>
    </subcellularLocation>
</comment>
<comment type="alternative products">
    <event type="alternative splicing"/>
    <isoform>
        <id>Q9JLI8-1</id>
        <name>1</name>
        <sequence type="displayed"/>
    </isoform>
    <isoform>
        <id>Q9JLI8-2</id>
        <name>2</name>
        <sequence type="described" ref="VSP_017252 VSP_017253"/>
    </isoform>
</comment>
<comment type="tissue specificity">
    <text evidence="6 8">Ubiquitously expressed, with low level of expression in liver, heart and skeletal (PubMed:10761712). Also detected in hematopoietic cells (at protein level) (PubMed:21447833).</text>
</comment>
<comment type="developmental stage">
    <text evidence="6">Expressed from early prenatal stages, as early as 7 dpc and increased thereafter.</text>
</comment>
<comment type="induction">
    <text evidence="8">Up-regulated in proliferating hematopoietic cells.</text>
</comment>
<comment type="disruption phenotype">
    <text evidence="11">Knockout of Sart3 is embryonic lethal.</text>
</comment>
<comment type="sequence caution" evidence="12">
    <conflict type="erroneous initiation">
        <sequence resource="EMBL-CDS" id="AAH36350"/>
    </conflict>
    <text>Extended N-terminus.</text>
</comment>
<feature type="initiator methionine" description="Removed" evidence="1">
    <location>
        <position position="1"/>
    </location>
</feature>
<feature type="chain" id="PRO_0000223314" description="Spliceosome associated factor 3, U4/U6 recycling protein">
    <location>
        <begin position="2"/>
        <end position="962"/>
    </location>
</feature>
<feature type="repeat" description="HAT 1" evidence="2">
    <location>
        <begin position="127"/>
        <end position="159"/>
    </location>
</feature>
<feature type="repeat" description="HAT 2" evidence="2">
    <location>
        <begin position="165"/>
        <end position="196"/>
    </location>
</feature>
<feature type="repeat" description="HAT 3" evidence="2">
    <location>
        <begin position="202"/>
        <end position="238"/>
    </location>
</feature>
<feature type="repeat" description="HAT 4" evidence="2">
    <location>
        <begin position="243"/>
        <end position="276"/>
    </location>
</feature>
<feature type="repeat" description="HAT 5" evidence="2">
    <location>
        <begin position="325"/>
        <end position="357"/>
    </location>
</feature>
<feature type="repeat" description="HAT 6" evidence="2">
    <location>
        <begin position="360"/>
        <end position="392"/>
    </location>
</feature>
<feature type="repeat" description="HAT 7" evidence="2">
    <location>
        <begin position="395"/>
        <end position="431"/>
    </location>
</feature>
<feature type="repeat" description="HAT 8" evidence="2">
    <location>
        <begin position="441"/>
        <end position="474"/>
    </location>
</feature>
<feature type="repeat" description="HAT 9" evidence="2">
    <location>
        <begin position="488"/>
        <end position="521"/>
    </location>
</feature>
<feature type="domain" description="RRM 1" evidence="3">
    <location>
        <begin position="704"/>
        <end position="782"/>
    </location>
</feature>
<feature type="domain" description="RRM 2" evidence="3">
    <location>
        <begin position="801"/>
        <end position="878"/>
    </location>
</feature>
<feature type="region of interest" description="Disordered" evidence="5">
    <location>
        <begin position="1"/>
        <end position="92"/>
    </location>
</feature>
<feature type="region of interest" description="Mediates interaction with PRPF3" evidence="1">
    <location>
        <begin position="2"/>
        <end position="352"/>
    </location>
</feature>
<feature type="region of interest" description="Required for interaction with USP4" evidence="1">
    <location>
        <begin position="488"/>
        <end position="521"/>
    </location>
</feature>
<feature type="region of interest" description="Necessary and sufficient for U6 snRNA binding" evidence="1">
    <location>
        <begin position="538"/>
        <end position="952"/>
    </location>
</feature>
<feature type="region of interest" description="Disordered" evidence="5">
    <location>
        <begin position="591"/>
        <end position="696"/>
    </location>
</feature>
<feature type="region of interest" description="Required for nuclear localization" evidence="1">
    <location>
        <begin position="601"/>
        <end position="670"/>
    </location>
</feature>
<feature type="region of interest" description="Disordered" evidence="5">
    <location>
        <begin position="880"/>
        <end position="962"/>
    </location>
</feature>
<feature type="coiled-coil region" evidence="2">
    <location>
        <begin position="559"/>
        <end position="618"/>
    </location>
</feature>
<feature type="short sequence motif" description="Nuclear localization signal" evidence="4">
    <location>
        <begin position="602"/>
        <end position="609"/>
    </location>
</feature>
<feature type="compositionally biased region" description="Low complexity" evidence="5">
    <location>
        <begin position="1"/>
        <end position="21"/>
    </location>
</feature>
<feature type="compositionally biased region" description="Acidic residues" evidence="5">
    <location>
        <begin position="81"/>
        <end position="92"/>
    </location>
</feature>
<feature type="compositionally biased region" description="Basic and acidic residues" evidence="5">
    <location>
        <begin position="591"/>
        <end position="602"/>
    </location>
</feature>
<feature type="compositionally biased region" description="Basic residues" evidence="5">
    <location>
        <begin position="603"/>
        <end position="618"/>
    </location>
</feature>
<feature type="compositionally biased region" description="Acidic residues" evidence="5">
    <location>
        <begin position="627"/>
        <end position="640"/>
    </location>
</feature>
<feature type="compositionally biased region" description="Basic and acidic residues" evidence="5">
    <location>
        <begin position="680"/>
        <end position="696"/>
    </location>
</feature>
<feature type="modified residue" description="N-acetylalanine" evidence="1">
    <location>
        <position position="2"/>
    </location>
</feature>
<feature type="modified residue" description="Phosphoserine" evidence="1">
    <location>
        <position position="10"/>
    </location>
</feature>
<feature type="modified residue" description="Phosphoserine" evidence="1">
    <location>
        <position position="216"/>
    </location>
</feature>
<feature type="modified residue" description="Phosphoserine" evidence="1">
    <location>
        <position position="651"/>
    </location>
</feature>
<feature type="modified residue" description="Phosphoserine" evidence="1">
    <location>
        <position position="795"/>
    </location>
</feature>
<feature type="modified residue" description="Phosphoserine" evidence="1">
    <location>
        <position position="852"/>
    </location>
</feature>
<feature type="modified residue" description="Omega-N-methylarginine" evidence="1">
    <location>
        <position position="906"/>
    </location>
</feature>
<feature type="splice variant" id="VSP_017252" description="In isoform 2." evidence="10">
    <original>DRQLKVKDLVLSVHSRAVRNCPWTVALWSRYLLAMERHGLDHQTIS</original>
    <variation>PCCAELPMDSCPVESVPSGHGATWTGPSNDFCDLRERSECRLHPGH</variation>
    <location>
        <begin position="356"/>
        <end position="401"/>
    </location>
</feature>
<feature type="splice variant" id="VSP_017253" description="In isoform 2." evidence="10">
    <location>
        <begin position="402"/>
        <end position="962"/>
    </location>
</feature>
<feature type="sequence conflict" description="In Ref. 4; BAC39661." evidence="12" ref="4">
    <original>M</original>
    <variation>V</variation>
    <location>
        <position position="160"/>
    </location>
</feature>
<feature type="sequence conflict" description="In Ref. 2; BAC97877." evidence="12" ref="2">
    <original>FRYSTTLEKHKLFISGLPFSCTK</original>
    <variation>CFLKKGVFRVGCPIGSAQ</variation>
    <location>
        <begin position="792"/>
        <end position="814"/>
    </location>
</feature>
<accession>Q9JLI8</accession>
<accession>Q6ZQI2</accession>
<accession>Q8BPK9</accession>
<accession>Q8C3B7</accession>
<accession>Q8CFU9</accession>